<evidence type="ECO:0000250" key="1">
    <source>
        <dbReference type="UniProtKB" id="Q9Y7D0"/>
    </source>
</evidence>
<evidence type="ECO:0000255" key="2"/>
<evidence type="ECO:0000269" key="3">
    <source>
    </source>
</evidence>
<evidence type="ECO:0000269" key="4">
    <source>
    </source>
</evidence>
<evidence type="ECO:0000269" key="5">
    <source>
    </source>
</evidence>
<evidence type="ECO:0000303" key="6">
    <source>
    </source>
</evidence>
<evidence type="ECO:0000305" key="7"/>
<evidence type="ECO:0000305" key="8">
    <source>
    </source>
</evidence>
<keyword id="KW-0521">NADP</keyword>
<keyword id="KW-0547">Nucleotide-binding</keyword>
<keyword id="KW-0560">Oxidoreductase</keyword>
<keyword id="KW-1185">Reference proteome</keyword>
<organism>
    <name type="scientific">Penicillium decumbens</name>
    <dbReference type="NCBI Taxonomy" id="69771"/>
    <lineage>
        <taxon>Eukaryota</taxon>
        <taxon>Fungi</taxon>
        <taxon>Dikarya</taxon>
        <taxon>Ascomycota</taxon>
        <taxon>Pezizomycotina</taxon>
        <taxon>Eurotiomycetes</taxon>
        <taxon>Eurotiomycetidae</taxon>
        <taxon>Eurotiales</taxon>
        <taxon>Aspergillaceae</taxon>
        <taxon>Penicillium</taxon>
    </lineage>
</organism>
<gene>
    <name evidence="6" type="primary">calK</name>
    <name type="ORF">PENDEC_c013G03312</name>
</gene>
<sequence>MSSPIQTAIVQTSETSAARLPLRVDRSAPIPQVKSEHHVLVRVLAVALNPNDHKMVTHFNMPDSIAGCDFCGIVTESSSNGTSLSSSAGARLPVGTRVCGALFPYSPEDPDNGSFAQYCVVDARLLVRVPDSWSDLEAASLGVGWSTISLAFSDPNALGLEGLPTQPSHRAKEPVLVYGGGTASGTLACQLLNLMGYTPIAIASNQSSELAMKYGASATACYTSKDCVDTVKSLAGKPIRRILDCITDAESAAICYSAMARSSGTYACLEECPDACRTRRIIKVKEVMGFQVLGVDIKLGDSTYTRLGDQKLMAIGIQWANEIQALMESGQLKAHPLRELPGGWEAIIEGLEMLRNGEVRGQKLVVRIPQE</sequence>
<feature type="chain" id="PRO_0000446487" description="Trans-enoyl reductase calK">
    <location>
        <begin position="1"/>
        <end position="371"/>
    </location>
</feature>
<feature type="binding site" evidence="1">
    <location>
        <begin position="51"/>
        <end position="54"/>
    </location>
    <ligand>
        <name>NADP(+)</name>
        <dbReference type="ChEBI" id="CHEBI:58349"/>
    </ligand>
</feature>
<feature type="binding site" evidence="2">
    <location>
        <begin position="145"/>
        <end position="152"/>
    </location>
    <ligand>
        <name>substrate</name>
    </ligand>
</feature>
<feature type="binding site" evidence="1">
    <location>
        <begin position="181"/>
        <end position="184"/>
    </location>
    <ligand>
        <name>NADP(+)</name>
        <dbReference type="ChEBI" id="CHEBI:58349"/>
    </ligand>
</feature>
<feature type="binding site" evidence="1">
    <location>
        <begin position="204"/>
        <end position="207"/>
    </location>
    <ligand>
        <name>NADP(+)</name>
        <dbReference type="ChEBI" id="CHEBI:58349"/>
    </ligand>
</feature>
<feature type="binding site" evidence="1">
    <location>
        <position position="222"/>
    </location>
    <ligand>
        <name>NADP(+)</name>
        <dbReference type="ChEBI" id="CHEBI:58349"/>
    </ligand>
</feature>
<feature type="binding site" evidence="1">
    <location>
        <begin position="269"/>
        <end position="270"/>
    </location>
    <ligand>
        <name>NADP(+)</name>
        <dbReference type="ChEBI" id="CHEBI:58349"/>
    </ligand>
</feature>
<feature type="binding site" evidence="2">
    <location>
        <begin position="289"/>
        <end position="293"/>
    </location>
    <ligand>
        <name>substrate</name>
    </ligand>
</feature>
<feature type="binding site" evidence="1">
    <location>
        <begin position="359"/>
        <end position="360"/>
    </location>
    <ligand>
        <name>NADP(+)</name>
        <dbReference type="ChEBI" id="CHEBI:58349"/>
    </ligand>
</feature>
<comment type="function">
    <text evidence="4 8">Trans-enoyl reductase; part of the gene cluster that mediates the biosynthesis of calbistrin A and related compounds. Calbistrin A is a secondary metabolite with an interesting structure that was recently found to have bioactivity against leukemia cells. It consists of two polyketides linked by an ester bond: a bicyclic decalin containing polyketide and a linear 12 carbon dioic acid structure (PubMed:30598828). The polyketide synthase calA is probably responsible for forming the decalin moiety. Because calA lacks a designated enoylreductase (ER) domain, the required activity is provided by the trans-enoyl reductase calK (PubMed:30598828). Following release from the PKS, calF then probably catalyzes the oxidation and the subsequent Diels Alder cycloisomerization that lead to the formation of the decalin moiety (Probable). The decalin polyketide backbone includes two C-methyl groups, at C7 and C11 in backbone, of which the C7 position is probably methylated by the methyltransferase domain of calA. A candidate for adding the methyl group at C11, if not done by CalA, is the cluster methyltransferase calH (Probable). Several additional tailoring enzymes within the cluster could be involved in the modification of the decalin polyketide product. Those include the 3 cytochrome P450 monooxygenases CalE, CalG and CalL, of which one might be responsible for the introduction of the extra hydroxyl group attached to the backbone of the decalin moiety, at position C9 in the backbone, that allows for attachment of the linear moiety (Probable). One tailoring enzyme activity that is expected to be involved in biosynthesis of calbistrin is an acyltransferase for connecting the two polyketide synthase products, and which could be performed by the cluster acyltransferase calJ (Probable). The enzyme responsible for the biosynthesis of the linear moiety, probably a second PKS, has not been identified yet (Probable).</text>
</comment>
<comment type="pathway">
    <text evidence="8">Secondary metabolite biosynthesis.</text>
</comment>
<comment type="subunit">
    <text evidence="1">Monomer.</text>
</comment>
<comment type="induction">
    <text evidence="4">Expression is induced in complex medium (Czapek yeast autolysate medium) supporting calbistrin production.</text>
</comment>
<comment type="biotechnology">
    <text evidence="3 5">Calbistrin A has been reported to possess a number of interesting bioactivities including antifungal active against Candida albicans and cytotoxic toward both healthy and leukemic human cells.</text>
</comment>
<comment type="similarity">
    <text evidence="7">Belongs to the zinc-containing alcohol dehydrogenase family.</text>
</comment>
<accession>A0A1V6PAP3</accession>
<dbReference type="EC" id="1.-.-.-" evidence="8"/>
<dbReference type="EMBL" id="MDYL01000013">
    <property type="protein sequence ID" value="OQD73827.1"/>
    <property type="molecule type" value="Genomic_DNA"/>
</dbReference>
<dbReference type="SMR" id="A0A1V6PAP3"/>
<dbReference type="STRING" id="69771.A0A1V6PAP3"/>
<dbReference type="OMA" id="DHKMVTH"/>
<dbReference type="Proteomes" id="UP000191522">
    <property type="component" value="Unassembled WGS sequence"/>
</dbReference>
<dbReference type="GO" id="GO:0000166">
    <property type="term" value="F:nucleotide binding"/>
    <property type="evidence" value="ECO:0007669"/>
    <property type="project" value="UniProtKB-KW"/>
</dbReference>
<dbReference type="GO" id="GO:0016651">
    <property type="term" value="F:oxidoreductase activity, acting on NAD(P)H"/>
    <property type="evidence" value="ECO:0007669"/>
    <property type="project" value="InterPro"/>
</dbReference>
<dbReference type="CDD" id="cd08249">
    <property type="entry name" value="enoyl_reductase_like"/>
    <property type="match status" value="1"/>
</dbReference>
<dbReference type="Gene3D" id="3.90.180.10">
    <property type="entry name" value="Medium-chain alcohol dehydrogenases, catalytic domain"/>
    <property type="match status" value="1"/>
</dbReference>
<dbReference type="Gene3D" id="3.40.50.720">
    <property type="entry name" value="NAD(P)-binding Rossmann-like Domain"/>
    <property type="match status" value="1"/>
</dbReference>
<dbReference type="InterPro" id="IPR013149">
    <property type="entry name" value="ADH-like_C"/>
</dbReference>
<dbReference type="InterPro" id="IPR013154">
    <property type="entry name" value="ADH-like_N"/>
</dbReference>
<dbReference type="InterPro" id="IPR011032">
    <property type="entry name" value="GroES-like_sf"/>
</dbReference>
<dbReference type="InterPro" id="IPR036291">
    <property type="entry name" value="NAD(P)-bd_dom_sf"/>
</dbReference>
<dbReference type="InterPro" id="IPR020843">
    <property type="entry name" value="PKS_ER"/>
</dbReference>
<dbReference type="InterPro" id="IPR047122">
    <property type="entry name" value="Trans-enoyl_RdTase-like"/>
</dbReference>
<dbReference type="PANTHER" id="PTHR45348">
    <property type="entry name" value="HYPOTHETICAL OXIDOREDUCTASE (EUROFUNG)"/>
    <property type="match status" value="1"/>
</dbReference>
<dbReference type="PANTHER" id="PTHR45348:SF1">
    <property type="entry name" value="TRANS-ENOYL REDUCTASE STHE"/>
    <property type="match status" value="1"/>
</dbReference>
<dbReference type="Pfam" id="PF08240">
    <property type="entry name" value="ADH_N"/>
    <property type="match status" value="1"/>
</dbReference>
<dbReference type="Pfam" id="PF00107">
    <property type="entry name" value="ADH_zinc_N"/>
    <property type="match status" value="1"/>
</dbReference>
<dbReference type="SMART" id="SM00829">
    <property type="entry name" value="PKS_ER"/>
    <property type="match status" value="1"/>
</dbReference>
<dbReference type="SUPFAM" id="SSF50129">
    <property type="entry name" value="GroES-like"/>
    <property type="match status" value="1"/>
</dbReference>
<dbReference type="SUPFAM" id="SSF51735">
    <property type="entry name" value="NAD(P)-binding Rossmann-fold domains"/>
    <property type="match status" value="1"/>
</dbReference>
<name>CALK_PENDC</name>
<protein>
    <recommendedName>
        <fullName evidence="6">Trans-enoyl reductase calK</fullName>
        <ecNumber evidence="8">1.-.-.-</ecNumber>
    </recommendedName>
    <alternativeName>
        <fullName evidence="6">Calbistrin biosynthesis cluster protein K</fullName>
    </alternativeName>
</protein>
<reference key="1">
    <citation type="journal article" date="2017" name="Nat. Microbiol.">
        <title>Global analysis of biosynthetic gene clusters reveals vast potential of secondary metabolite production in Penicillium species.</title>
        <authorList>
            <person name="Nielsen J.C."/>
            <person name="Grijseels S."/>
            <person name="Prigent S."/>
            <person name="Ji B."/>
            <person name="Dainat J."/>
            <person name="Nielsen K.F."/>
            <person name="Frisvad J.C."/>
            <person name="Workman M."/>
            <person name="Nielsen J."/>
        </authorList>
    </citation>
    <scope>NUCLEOTIDE SEQUENCE [LARGE SCALE GENOMIC DNA]</scope>
    <source>
        <strain>IBT 11843</strain>
    </source>
</reference>
<reference key="2">
    <citation type="journal article" date="1993" name="J. Antibiot.">
        <title>Calbistrins, novel antifungal agents produced by Penicillium restrictum. I. Production, taxonomy of the producing organism and biological activity.</title>
        <authorList>
            <person name="Jackson M."/>
            <person name="Karwowski J.P."/>
            <person name="Humphrey P.E."/>
            <person name="Kohl W.L."/>
            <person name="Barlow G.J."/>
            <person name="Tanaka S.K."/>
        </authorList>
    </citation>
    <scope>BIOTECHNOLOGY</scope>
</reference>
<reference key="3">
    <citation type="journal article" date="2013" name="Molecules">
        <title>Bio-activity and dereplication-based discovery of ophiobolins and other fungal secondary metabolites targeting leukemia cells.</title>
        <authorList>
            <person name="Bladt T.T."/>
            <person name="Duerr C."/>
            <person name="Knudsen P.B."/>
            <person name="Kildgaard S."/>
            <person name="Frisvad J.C."/>
            <person name="Gotfredsen C.H."/>
            <person name="Seiffert M."/>
            <person name="Larsen T.O."/>
        </authorList>
    </citation>
    <scope>BIOTECHNOLOGY</scope>
</reference>
<reference key="4">
    <citation type="journal article" date="2018" name="Fungal Biol. Biotechnol.">
        <title>Identification of the decumbenone biosynthetic gene cluster in Penicillium decumbens and the importance for production of calbistrin.</title>
        <authorList>
            <person name="Grijseels S."/>
            <person name="Pohl C."/>
            <person name="Nielsen J.C."/>
            <person name="Wasil Z."/>
            <person name="Nygaard Y."/>
            <person name="Nielsen J."/>
            <person name="Frisvad J.C."/>
            <person name="Nielsen K.F."/>
            <person name="Workman M."/>
            <person name="Larsen T.O."/>
            <person name="Driessen A.J.M."/>
            <person name="Frandsen R.J.N."/>
        </authorList>
    </citation>
    <scope>IDENTIFICATION</scope>
    <scope>FUNCTION</scope>
    <scope>INDUCTION</scope>
    <scope>PATHWAY</scope>
</reference>
<proteinExistence type="evidence at protein level"/>